<accession>Q7N5Z7</accession>
<reference key="1">
    <citation type="journal article" date="2003" name="Nat. Biotechnol.">
        <title>The genome sequence of the entomopathogenic bacterium Photorhabdus luminescens.</title>
        <authorList>
            <person name="Duchaud E."/>
            <person name="Rusniok C."/>
            <person name="Frangeul L."/>
            <person name="Buchrieser C."/>
            <person name="Givaudan A."/>
            <person name="Taourit S."/>
            <person name="Bocs S."/>
            <person name="Boursaux-Eude C."/>
            <person name="Chandler M."/>
            <person name="Charles J.-F."/>
            <person name="Dassa E."/>
            <person name="Derose R."/>
            <person name="Derzelle S."/>
            <person name="Freyssinet G."/>
            <person name="Gaudriault S."/>
            <person name="Medigue C."/>
            <person name="Lanois A."/>
            <person name="Powell K."/>
            <person name="Siguier P."/>
            <person name="Vincent R."/>
            <person name="Wingate V."/>
            <person name="Zouine M."/>
            <person name="Glaser P."/>
            <person name="Boemare N."/>
            <person name="Danchin A."/>
            <person name="Kunst F."/>
        </authorList>
    </citation>
    <scope>NUCLEOTIDE SEQUENCE [LARGE SCALE GENOMIC DNA]</scope>
    <source>
        <strain>DSM 15139 / CIP 105565 / TT01</strain>
    </source>
</reference>
<comment type="function">
    <text evidence="1">Catalyzes the formation of methylglyoxal from dihydroxyacetone phosphate.</text>
</comment>
<comment type="catalytic activity">
    <reaction evidence="1">
        <text>dihydroxyacetone phosphate = methylglyoxal + phosphate</text>
        <dbReference type="Rhea" id="RHEA:17937"/>
        <dbReference type="ChEBI" id="CHEBI:17158"/>
        <dbReference type="ChEBI" id="CHEBI:43474"/>
        <dbReference type="ChEBI" id="CHEBI:57642"/>
        <dbReference type="EC" id="4.2.3.3"/>
    </reaction>
</comment>
<comment type="similarity">
    <text evidence="1">Belongs to the methylglyoxal synthase family.</text>
</comment>
<proteinExistence type="inferred from homology"/>
<name>MGSA_PHOLL</name>
<evidence type="ECO:0000255" key="1">
    <source>
        <dbReference type="HAMAP-Rule" id="MF_00549"/>
    </source>
</evidence>
<protein>
    <recommendedName>
        <fullName evidence="1">Methylglyoxal synthase</fullName>
        <shortName evidence="1">MGS</shortName>
        <ecNumber evidence="1">4.2.3.3</ecNumber>
    </recommendedName>
</protein>
<organism>
    <name type="scientific">Photorhabdus laumondii subsp. laumondii (strain DSM 15139 / CIP 105565 / TT01)</name>
    <name type="common">Photorhabdus luminescens subsp. laumondii</name>
    <dbReference type="NCBI Taxonomy" id="243265"/>
    <lineage>
        <taxon>Bacteria</taxon>
        <taxon>Pseudomonadati</taxon>
        <taxon>Pseudomonadota</taxon>
        <taxon>Gammaproteobacteria</taxon>
        <taxon>Enterobacterales</taxon>
        <taxon>Morganellaceae</taxon>
        <taxon>Photorhabdus</taxon>
    </lineage>
</organism>
<sequence>MELTTRTMATAKNIALIAHDHCKTSLLAWSKKHKSLLKKHHLYATGTTGNLIQNETGLSVTNMLSGPMGGDQQIGSLISEGKIDVLIFFWDPLNSVPHDPDVKALLRLATVWNIPVATNLASADFIVSSPLFSESVDIQVPDYQHYLNGRLK</sequence>
<dbReference type="EC" id="4.2.3.3" evidence="1"/>
<dbReference type="EMBL" id="BX571865">
    <property type="protein sequence ID" value="CAE14073.1"/>
    <property type="molecule type" value="Genomic_DNA"/>
</dbReference>
<dbReference type="RefSeq" id="WP_011146058.1">
    <property type="nucleotide sequence ID" value="NC_005126.1"/>
</dbReference>
<dbReference type="SMR" id="Q7N5Z7"/>
<dbReference type="STRING" id="243265.plu1780"/>
<dbReference type="GeneID" id="48848060"/>
<dbReference type="KEGG" id="plu:plu1780"/>
<dbReference type="eggNOG" id="COG1803">
    <property type="taxonomic scope" value="Bacteria"/>
</dbReference>
<dbReference type="HOGENOM" id="CLU_120420_0_1_6"/>
<dbReference type="OrthoDB" id="9787147at2"/>
<dbReference type="Proteomes" id="UP000002514">
    <property type="component" value="Chromosome"/>
</dbReference>
<dbReference type="GO" id="GO:0005829">
    <property type="term" value="C:cytosol"/>
    <property type="evidence" value="ECO:0007669"/>
    <property type="project" value="TreeGrafter"/>
</dbReference>
<dbReference type="GO" id="GO:0008929">
    <property type="term" value="F:methylglyoxal synthase activity"/>
    <property type="evidence" value="ECO:0007669"/>
    <property type="project" value="UniProtKB-UniRule"/>
</dbReference>
<dbReference type="GO" id="GO:0019242">
    <property type="term" value="P:methylglyoxal biosynthetic process"/>
    <property type="evidence" value="ECO:0007669"/>
    <property type="project" value="UniProtKB-UniRule"/>
</dbReference>
<dbReference type="CDD" id="cd01422">
    <property type="entry name" value="MGS"/>
    <property type="match status" value="1"/>
</dbReference>
<dbReference type="FunFam" id="3.40.50.1380:FF:000002">
    <property type="entry name" value="Methylglyoxal synthase"/>
    <property type="match status" value="1"/>
</dbReference>
<dbReference type="Gene3D" id="3.40.50.1380">
    <property type="entry name" value="Methylglyoxal synthase-like domain"/>
    <property type="match status" value="1"/>
</dbReference>
<dbReference type="HAMAP" id="MF_00549">
    <property type="entry name" value="Methylglyoxal_synth"/>
    <property type="match status" value="1"/>
</dbReference>
<dbReference type="InterPro" id="IPR004363">
    <property type="entry name" value="Methylgl_synth"/>
</dbReference>
<dbReference type="InterPro" id="IPR018148">
    <property type="entry name" value="Methylglyoxal_synth_AS"/>
</dbReference>
<dbReference type="InterPro" id="IPR011607">
    <property type="entry name" value="MGS-like_dom"/>
</dbReference>
<dbReference type="InterPro" id="IPR036914">
    <property type="entry name" value="MGS-like_dom_sf"/>
</dbReference>
<dbReference type="NCBIfam" id="TIGR00160">
    <property type="entry name" value="MGSA"/>
    <property type="match status" value="1"/>
</dbReference>
<dbReference type="NCBIfam" id="NF003559">
    <property type="entry name" value="PRK05234.1"/>
    <property type="match status" value="1"/>
</dbReference>
<dbReference type="PANTHER" id="PTHR30492">
    <property type="entry name" value="METHYLGLYOXAL SYNTHASE"/>
    <property type="match status" value="1"/>
</dbReference>
<dbReference type="PANTHER" id="PTHR30492:SF0">
    <property type="entry name" value="METHYLGLYOXAL SYNTHASE"/>
    <property type="match status" value="1"/>
</dbReference>
<dbReference type="Pfam" id="PF02142">
    <property type="entry name" value="MGS"/>
    <property type="match status" value="1"/>
</dbReference>
<dbReference type="PIRSF" id="PIRSF006614">
    <property type="entry name" value="Methylglyox_syn"/>
    <property type="match status" value="1"/>
</dbReference>
<dbReference type="SMART" id="SM00851">
    <property type="entry name" value="MGS"/>
    <property type="match status" value="1"/>
</dbReference>
<dbReference type="SUPFAM" id="SSF52335">
    <property type="entry name" value="Methylglyoxal synthase-like"/>
    <property type="match status" value="1"/>
</dbReference>
<dbReference type="PROSITE" id="PS01335">
    <property type="entry name" value="METHYLGLYOXAL_SYNTH"/>
    <property type="match status" value="1"/>
</dbReference>
<dbReference type="PROSITE" id="PS51855">
    <property type="entry name" value="MGS"/>
    <property type="match status" value="1"/>
</dbReference>
<gene>
    <name evidence="1" type="primary">mgsA</name>
    <name type="ordered locus">plu1780</name>
</gene>
<keyword id="KW-0456">Lyase</keyword>
<keyword id="KW-1185">Reference proteome</keyword>
<feature type="chain" id="PRO_0000178640" description="Methylglyoxal synthase">
    <location>
        <begin position="1"/>
        <end position="152"/>
    </location>
</feature>
<feature type="domain" description="MGS-like" evidence="1">
    <location>
        <begin position="6"/>
        <end position="152"/>
    </location>
</feature>
<feature type="active site" description="Proton donor/acceptor" evidence="1">
    <location>
        <position position="71"/>
    </location>
</feature>
<feature type="binding site" evidence="1">
    <location>
        <position position="19"/>
    </location>
    <ligand>
        <name>substrate</name>
    </ligand>
</feature>
<feature type="binding site" evidence="1">
    <location>
        <position position="23"/>
    </location>
    <ligand>
        <name>substrate</name>
    </ligand>
</feature>
<feature type="binding site" evidence="1">
    <location>
        <begin position="45"/>
        <end position="48"/>
    </location>
    <ligand>
        <name>substrate</name>
    </ligand>
</feature>
<feature type="binding site" evidence="1">
    <location>
        <begin position="65"/>
        <end position="66"/>
    </location>
    <ligand>
        <name>substrate</name>
    </ligand>
</feature>
<feature type="binding site" evidence="1">
    <location>
        <position position="98"/>
    </location>
    <ligand>
        <name>substrate</name>
    </ligand>
</feature>